<evidence type="ECO:0000255" key="1">
    <source>
        <dbReference type="HAMAP-Rule" id="MF_01595"/>
    </source>
</evidence>
<dbReference type="EC" id="2.7.7.8" evidence="1"/>
<dbReference type="EMBL" id="LT708304">
    <property type="protein sequence ID" value="SIU01424.1"/>
    <property type="molecule type" value="Genomic_DNA"/>
</dbReference>
<dbReference type="RefSeq" id="NP_856452.1">
    <property type="nucleotide sequence ID" value="NC_002945.3"/>
</dbReference>
<dbReference type="RefSeq" id="WP_003414124.1">
    <property type="nucleotide sequence ID" value="NC_002945.4"/>
</dbReference>
<dbReference type="SMR" id="Q7TXW0"/>
<dbReference type="KEGG" id="mbo:BQ2027_MB2806C"/>
<dbReference type="PATRIC" id="fig|233413.5.peg.3077"/>
<dbReference type="Proteomes" id="UP000001419">
    <property type="component" value="Chromosome"/>
</dbReference>
<dbReference type="GO" id="GO:0005829">
    <property type="term" value="C:cytosol"/>
    <property type="evidence" value="ECO:0007669"/>
    <property type="project" value="TreeGrafter"/>
</dbReference>
<dbReference type="GO" id="GO:0000175">
    <property type="term" value="F:3'-5'-RNA exonuclease activity"/>
    <property type="evidence" value="ECO:0007669"/>
    <property type="project" value="TreeGrafter"/>
</dbReference>
<dbReference type="GO" id="GO:0000287">
    <property type="term" value="F:magnesium ion binding"/>
    <property type="evidence" value="ECO:0007669"/>
    <property type="project" value="UniProtKB-UniRule"/>
</dbReference>
<dbReference type="GO" id="GO:0004654">
    <property type="term" value="F:polyribonucleotide nucleotidyltransferase activity"/>
    <property type="evidence" value="ECO:0007669"/>
    <property type="project" value="UniProtKB-UniRule"/>
</dbReference>
<dbReference type="GO" id="GO:0003723">
    <property type="term" value="F:RNA binding"/>
    <property type="evidence" value="ECO:0007669"/>
    <property type="project" value="UniProtKB-UniRule"/>
</dbReference>
<dbReference type="GO" id="GO:0006402">
    <property type="term" value="P:mRNA catabolic process"/>
    <property type="evidence" value="ECO:0007669"/>
    <property type="project" value="UniProtKB-UniRule"/>
</dbReference>
<dbReference type="GO" id="GO:0006396">
    <property type="term" value="P:RNA processing"/>
    <property type="evidence" value="ECO:0007669"/>
    <property type="project" value="InterPro"/>
</dbReference>
<dbReference type="CDD" id="cd02393">
    <property type="entry name" value="KH-I_PNPase"/>
    <property type="match status" value="1"/>
</dbReference>
<dbReference type="CDD" id="cd11364">
    <property type="entry name" value="RNase_PH_PNPase_2"/>
    <property type="match status" value="1"/>
</dbReference>
<dbReference type="CDD" id="cd04472">
    <property type="entry name" value="S1_PNPase"/>
    <property type="match status" value="1"/>
</dbReference>
<dbReference type="FunFam" id="2.40.50.140:FF:000069">
    <property type="entry name" value="Polyribonucleotide nucleotidyltransferase"/>
    <property type="match status" value="1"/>
</dbReference>
<dbReference type="FunFam" id="3.30.1370.10:FF:000001">
    <property type="entry name" value="Polyribonucleotide nucleotidyltransferase"/>
    <property type="match status" value="1"/>
</dbReference>
<dbReference type="FunFam" id="3.30.230.70:FF:000001">
    <property type="entry name" value="Polyribonucleotide nucleotidyltransferase"/>
    <property type="match status" value="1"/>
</dbReference>
<dbReference type="FunFam" id="3.30.230.70:FF:000002">
    <property type="entry name" value="Polyribonucleotide nucleotidyltransferase"/>
    <property type="match status" value="1"/>
</dbReference>
<dbReference type="Gene3D" id="3.30.230.70">
    <property type="entry name" value="GHMP Kinase, N-terminal domain"/>
    <property type="match status" value="2"/>
</dbReference>
<dbReference type="Gene3D" id="3.30.1370.10">
    <property type="entry name" value="K Homology domain, type 1"/>
    <property type="match status" value="1"/>
</dbReference>
<dbReference type="Gene3D" id="2.40.50.140">
    <property type="entry name" value="Nucleic acid-binding proteins"/>
    <property type="match status" value="1"/>
</dbReference>
<dbReference type="HAMAP" id="MF_01595">
    <property type="entry name" value="PNPase"/>
    <property type="match status" value="1"/>
</dbReference>
<dbReference type="InterPro" id="IPR001247">
    <property type="entry name" value="ExoRNase_PH_dom1"/>
</dbReference>
<dbReference type="InterPro" id="IPR036345">
    <property type="entry name" value="ExoRNase_PH_dom2_sf"/>
</dbReference>
<dbReference type="InterPro" id="IPR014069">
    <property type="entry name" value="GPSI/PNP"/>
</dbReference>
<dbReference type="InterPro" id="IPR004087">
    <property type="entry name" value="KH_dom"/>
</dbReference>
<dbReference type="InterPro" id="IPR004088">
    <property type="entry name" value="KH_dom_type_1"/>
</dbReference>
<dbReference type="InterPro" id="IPR036612">
    <property type="entry name" value="KH_dom_type_1_sf"/>
</dbReference>
<dbReference type="InterPro" id="IPR012340">
    <property type="entry name" value="NA-bd_OB-fold"/>
</dbReference>
<dbReference type="InterPro" id="IPR012162">
    <property type="entry name" value="PNPase"/>
</dbReference>
<dbReference type="InterPro" id="IPR027408">
    <property type="entry name" value="PNPase/RNase_PH_dom_sf"/>
</dbReference>
<dbReference type="InterPro" id="IPR015848">
    <property type="entry name" value="PNPase_PH_RNA-bd_bac/org-type"/>
</dbReference>
<dbReference type="InterPro" id="IPR036456">
    <property type="entry name" value="PNPase_PH_RNA-bd_sf"/>
</dbReference>
<dbReference type="InterPro" id="IPR020568">
    <property type="entry name" value="Ribosomal_Su5_D2-typ_SF"/>
</dbReference>
<dbReference type="InterPro" id="IPR003029">
    <property type="entry name" value="S1_domain"/>
</dbReference>
<dbReference type="NCBIfam" id="TIGR03591">
    <property type="entry name" value="polynuc_phos"/>
    <property type="match status" value="1"/>
</dbReference>
<dbReference type="NCBIfam" id="TIGR02696">
    <property type="entry name" value="pppGpp_PNP"/>
    <property type="match status" value="1"/>
</dbReference>
<dbReference type="NCBIfam" id="NF008805">
    <property type="entry name" value="PRK11824.1"/>
    <property type="match status" value="1"/>
</dbReference>
<dbReference type="PANTHER" id="PTHR11252">
    <property type="entry name" value="POLYRIBONUCLEOTIDE NUCLEOTIDYLTRANSFERASE"/>
    <property type="match status" value="1"/>
</dbReference>
<dbReference type="PANTHER" id="PTHR11252:SF0">
    <property type="entry name" value="POLYRIBONUCLEOTIDE NUCLEOTIDYLTRANSFERASE 1, MITOCHONDRIAL"/>
    <property type="match status" value="1"/>
</dbReference>
<dbReference type="Pfam" id="PF00013">
    <property type="entry name" value="KH_1"/>
    <property type="match status" value="1"/>
</dbReference>
<dbReference type="Pfam" id="PF03726">
    <property type="entry name" value="PNPase"/>
    <property type="match status" value="1"/>
</dbReference>
<dbReference type="Pfam" id="PF01138">
    <property type="entry name" value="RNase_PH"/>
    <property type="match status" value="2"/>
</dbReference>
<dbReference type="Pfam" id="PF00575">
    <property type="entry name" value="S1"/>
    <property type="match status" value="1"/>
</dbReference>
<dbReference type="PIRSF" id="PIRSF005499">
    <property type="entry name" value="PNPase"/>
    <property type="match status" value="1"/>
</dbReference>
<dbReference type="SMART" id="SM00322">
    <property type="entry name" value="KH"/>
    <property type="match status" value="1"/>
</dbReference>
<dbReference type="SMART" id="SM00316">
    <property type="entry name" value="S1"/>
    <property type="match status" value="1"/>
</dbReference>
<dbReference type="SUPFAM" id="SSF54791">
    <property type="entry name" value="Eukaryotic type KH-domain (KH-domain type I)"/>
    <property type="match status" value="1"/>
</dbReference>
<dbReference type="SUPFAM" id="SSF50249">
    <property type="entry name" value="Nucleic acid-binding proteins"/>
    <property type="match status" value="1"/>
</dbReference>
<dbReference type="SUPFAM" id="SSF46915">
    <property type="entry name" value="Polynucleotide phosphorylase/guanosine pentaphosphate synthase (PNPase/GPSI), domain 3"/>
    <property type="match status" value="1"/>
</dbReference>
<dbReference type="SUPFAM" id="SSF55666">
    <property type="entry name" value="Ribonuclease PH domain 2-like"/>
    <property type="match status" value="2"/>
</dbReference>
<dbReference type="SUPFAM" id="SSF54211">
    <property type="entry name" value="Ribosomal protein S5 domain 2-like"/>
    <property type="match status" value="2"/>
</dbReference>
<dbReference type="PROSITE" id="PS50084">
    <property type="entry name" value="KH_TYPE_1"/>
    <property type="match status" value="1"/>
</dbReference>
<dbReference type="PROSITE" id="PS50126">
    <property type="entry name" value="S1"/>
    <property type="match status" value="1"/>
</dbReference>
<sequence>MSAAEIDEGVFETTATIDNGSFGTRTIRFETGRLALQAAGAVVAYLDDDNMLLSATTASKNPKEHFDFFPLTVDVEERMYAAGRIPGSFFRREGRPSTDAILTCRLIDRPLRPSFVDGLRNEIQIVVTILSLDPGDLYDVLAINAASASTQLGGLPFSGPIGGVRVALIDGTWVGFPTVDQIERAVFDMVVAGRIVEGDVAIMMVEAEATENVVELVEGGAQAPTESVVAAGLEAAKPFIAALCTAQQELADAAGKSGKPTVDFPVFPDYGEDVYYSVSSVATDELAAALTIGGKAERDQRIDEIKTQVVQRLADTYEGREKEVGAALRALTKKLVRQRILTDHFRIDGRGITDIRALSAEVAVVPRAHGSALFERGETQILGVTTLDMIKMAQQIDSLGPETSKRYMHHYNFPPFSTGETGRVGSPKRREIGHGALAERALVPVLPSVEEFPYAIRQVSEALGSNGSTSMGSVCASTLALLNAGVPLKAPVAGIAMGLVSDDIQVEGAVDGVVERRFVTLTDILGAEDAFGDMDFKVAGTKDFVTALQLDTKLDGIPSQVLAGALEQAKDARLTILEVMAEAIDRPDEMSPYAPRVTTIKVPVDKIGEVIGPKGKVINAITEETGAQISIEDDGTVFVGATDGPSAQAAIDKINAIANPQLPTVGERFLGTVVKTTDFGAFVSLLPGRDGLVHISKLGKGKRIAKVEDVVNVGDKLRVEIADIDKRGKISLILVADEDSTAAATDAATVTS</sequence>
<comment type="function">
    <text evidence="1">Involved in mRNA degradation. Catalyzes the phosphorolysis of single-stranded polyribonucleotides processively in the 3'- to 5'-direction.</text>
</comment>
<comment type="catalytic activity">
    <reaction evidence="1">
        <text>RNA(n+1) + phosphate = RNA(n) + a ribonucleoside 5'-diphosphate</text>
        <dbReference type="Rhea" id="RHEA:22096"/>
        <dbReference type="Rhea" id="RHEA-COMP:14527"/>
        <dbReference type="Rhea" id="RHEA-COMP:17342"/>
        <dbReference type="ChEBI" id="CHEBI:43474"/>
        <dbReference type="ChEBI" id="CHEBI:57930"/>
        <dbReference type="ChEBI" id="CHEBI:140395"/>
        <dbReference type="EC" id="2.7.7.8"/>
    </reaction>
</comment>
<comment type="cofactor">
    <cofactor evidence="1">
        <name>Mg(2+)</name>
        <dbReference type="ChEBI" id="CHEBI:18420"/>
    </cofactor>
</comment>
<comment type="subcellular location">
    <subcellularLocation>
        <location evidence="1">Cytoplasm</location>
    </subcellularLocation>
</comment>
<comment type="similarity">
    <text evidence="1">Belongs to the polyribonucleotide nucleotidyltransferase family.</text>
</comment>
<reference key="1">
    <citation type="journal article" date="2003" name="Proc. Natl. Acad. Sci. U.S.A.">
        <title>The complete genome sequence of Mycobacterium bovis.</title>
        <authorList>
            <person name="Garnier T."/>
            <person name="Eiglmeier K."/>
            <person name="Camus J.-C."/>
            <person name="Medina N."/>
            <person name="Mansoor H."/>
            <person name="Pryor M."/>
            <person name="Duthoy S."/>
            <person name="Grondin S."/>
            <person name="Lacroix C."/>
            <person name="Monsempe C."/>
            <person name="Simon S."/>
            <person name="Harris B."/>
            <person name="Atkin R."/>
            <person name="Doggett J."/>
            <person name="Mayes R."/>
            <person name="Keating L."/>
            <person name="Wheeler P.R."/>
            <person name="Parkhill J."/>
            <person name="Barrell B.G."/>
            <person name="Cole S.T."/>
            <person name="Gordon S.V."/>
            <person name="Hewinson R.G."/>
        </authorList>
    </citation>
    <scope>NUCLEOTIDE SEQUENCE [LARGE SCALE GENOMIC DNA]</scope>
    <source>
        <strain>ATCC BAA-935 / AF2122/97</strain>
    </source>
</reference>
<reference key="2">
    <citation type="journal article" date="2017" name="Genome Announc.">
        <title>Updated reference genome sequence and annotation of Mycobacterium bovis AF2122/97.</title>
        <authorList>
            <person name="Malone K.M."/>
            <person name="Farrell D."/>
            <person name="Stuber T.P."/>
            <person name="Schubert O.T."/>
            <person name="Aebersold R."/>
            <person name="Robbe-Austerman S."/>
            <person name="Gordon S.V."/>
        </authorList>
    </citation>
    <scope>NUCLEOTIDE SEQUENCE [LARGE SCALE GENOMIC DNA]</scope>
    <scope>GENOME REANNOTATION</scope>
    <source>
        <strain>ATCC BAA-935 / AF2122/97</strain>
    </source>
</reference>
<name>PNP_MYCBO</name>
<keyword id="KW-0963">Cytoplasm</keyword>
<keyword id="KW-0460">Magnesium</keyword>
<keyword id="KW-0479">Metal-binding</keyword>
<keyword id="KW-0548">Nucleotidyltransferase</keyword>
<keyword id="KW-1185">Reference proteome</keyword>
<keyword id="KW-0694">RNA-binding</keyword>
<keyword id="KW-0808">Transferase</keyword>
<organism>
    <name type="scientific">Mycobacterium bovis (strain ATCC BAA-935 / AF2122/97)</name>
    <dbReference type="NCBI Taxonomy" id="233413"/>
    <lineage>
        <taxon>Bacteria</taxon>
        <taxon>Bacillati</taxon>
        <taxon>Actinomycetota</taxon>
        <taxon>Actinomycetes</taxon>
        <taxon>Mycobacteriales</taxon>
        <taxon>Mycobacteriaceae</taxon>
        <taxon>Mycobacterium</taxon>
        <taxon>Mycobacterium tuberculosis complex</taxon>
    </lineage>
</organism>
<gene>
    <name evidence="1" type="primary">pnp</name>
    <name type="ordered locus">BQ2027_MB2806C</name>
</gene>
<proteinExistence type="inferred from homology"/>
<protein>
    <recommendedName>
        <fullName evidence="1">Polyribonucleotide nucleotidyltransferase</fullName>
        <ecNumber evidence="1">2.7.7.8</ecNumber>
    </recommendedName>
    <alternativeName>
        <fullName evidence="1">Polynucleotide phosphorylase</fullName>
        <shortName evidence="1">PNPase</shortName>
    </alternativeName>
</protein>
<accession>Q7TXW0</accession>
<accession>A0A1R3Y278</accession>
<accession>X2BLY3</accession>
<feature type="chain" id="PRO_0000329716" description="Polyribonucleotide nucleotidyltransferase">
    <location>
        <begin position="1"/>
        <end position="752"/>
    </location>
</feature>
<feature type="domain" description="KH" evidence="1">
    <location>
        <begin position="595"/>
        <end position="654"/>
    </location>
</feature>
<feature type="domain" description="S1 motif" evidence="1">
    <location>
        <begin position="666"/>
        <end position="735"/>
    </location>
</feature>
<feature type="binding site" evidence="1">
    <location>
        <position position="529"/>
    </location>
    <ligand>
        <name>Mg(2+)</name>
        <dbReference type="ChEBI" id="CHEBI:18420"/>
    </ligand>
</feature>
<feature type="binding site" evidence="1">
    <location>
        <position position="535"/>
    </location>
    <ligand>
        <name>Mg(2+)</name>
        <dbReference type="ChEBI" id="CHEBI:18420"/>
    </ligand>
</feature>